<protein>
    <recommendedName>
        <fullName>17.5 kDa class I heat shock protein</fullName>
    </recommendedName>
    <alternativeName>
        <fullName>HSP 17.5-M</fullName>
    </alternativeName>
</protein>
<organism>
    <name type="scientific">Glycine max</name>
    <name type="common">Soybean</name>
    <name type="synonym">Glycine hispida</name>
    <dbReference type="NCBI Taxonomy" id="3847"/>
    <lineage>
        <taxon>Eukaryota</taxon>
        <taxon>Viridiplantae</taxon>
        <taxon>Streptophyta</taxon>
        <taxon>Embryophyta</taxon>
        <taxon>Tracheophyta</taxon>
        <taxon>Spermatophyta</taxon>
        <taxon>Magnoliopsida</taxon>
        <taxon>eudicotyledons</taxon>
        <taxon>Gunneridae</taxon>
        <taxon>Pentapetalae</taxon>
        <taxon>rosids</taxon>
        <taxon>fabids</taxon>
        <taxon>Fabales</taxon>
        <taxon>Fabaceae</taxon>
        <taxon>Papilionoideae</taxon>
        <taxon>50 kb inversion clade</taxon>
        <taxon>NPAAA clade</taxon>
        <taxon>indigoferoid/millettioid clade</taxon>
        <taxon>Phaseoleae</taxon>
        <taxon>Glycine</taxon>
        <taxon>Glycine subgen. Soja</taxon>
    </lineage>
</organism>
<comment type="subunit">
    <text>Forms oligomeric structures.</text>
</comment>
<comment type="subcellular location">
    <subcellularLocation>
        <location>Cytoplasm</location>
    </subcellularLocation>
</comment>
<comment type="similarity">
    <text evidence="1">Belongs to the small heat shock protein (HSP20) family.</text>
</comment>
<accession>P04793</accession>
<reference key="1">
    <citation type="journal article" date="1985" name="Mol. Cell. Biol.">
        <title>Genes for low-molecular-weight heat shock proteins of soybeans: sequence analysis of a multigene family.</title>
        <authorList>
            <person name="Nagao R.T."/>
            <person name="Czarnecka E."/>
            <person name="Gurley W.B."/>
            <person name="Schoeffl F."/>
            <person name="Key J.L."/>
        </authorList>
    </citation>
    <scope>NUCLEOTIDE SEQUENCE [GENOMIC DNA]</scope>
    <source>
        <strain>cv. Corsoy</strain>
    </source>
</reference>
<name>HSP13_SOYBN</name>
<keyword id="KW-0963">Cytoplasm</keyword>
<keyword id="KW-1185">Reference proteome</keyword>
<keyword id="KW-0346">Stress response</keyword>
<evidence type="ECO:0000255" key="1">
    <source>
        <dbReference type="PROSITE-ProRule" id="PRU00285"/>
    </source>
</evidence>
<sequence length="153" mass="17546">MSLIPSIFGGRRSNVFDPFSLDVWDPFKDFHFPTSLSAENSAFVNTRVDWKETPEAHVFEADIPGLKKEEVKVQIEDDRVLQISGERNLEKEDKNDTWHRVERSSGNFMRRFRLPENAKVEQVKASMENGVLTVTVPKEEVKKPDVKAIEISG</sequence>
<gene>
    <name type="primary">HSP17.5-M</name>
</gene>
<proteinExistence type="inferred from homology"/>
<feature type="chain" id="PRO_0000125986" description="17.5 kDa class I heat shock protein">
    <location>
        <begin position="1"/>
        <end position="153"/>
    </location>
</feature>
<feature type="domain" description="sHSP" evidence="1">
    <location>
        <begin position="39"/>
        <end position="153"/>
    </location>
</feature>
<dbReference type="EMBL" id="M11318">
    <property type="protein sequence ID" value="AAB03893.1"/>
    <property type="molecule type" value="Genomic_DNA"/>
</dbReference>
<dbReference type="PIR" id="T07624">
    <property type="entry name" value="T07624"/>
</dbReference>
<dbReference type="RefSeq" id="NP_001362775.1">
    <property type="nucleotide sequence ID" value="NM_001375846.1"/>
</dbReference>
<dbReference type="RefSeq" id="XP_003529343.1">
    <property type="nucleotide sequence ID" value="XM_003529295.3"/>
</dbReference>
<dbReference type="SMR" id="P04793"/>
<dbReference type="FunCoup" id="P04793">
    <property type="interactions" value="335"/>
</dbReference>
<dbReference type="PaxDb" id="3847-GLYMA07G32090.1"/>
<dbReference type="EnsemblPlants" id="KRH50107">
    <property type="protein sequence ID" value="KRH50107"/>
    <property type="gene ID" value="GLYMA_07G200500"/>
</dbReference>
<dbReference type="GeneID" id="100791172"/>
<dbReference type="Gramene" id="KRH50107">
    <property type="protein sequence ID" value="KRH50107"/>
    <property type="gene ID" value="GLYMA_07G200500"/>
</dbReference>
<dbReference type="eggNOG" id="KOG0710">
    <property type="taxonomic scope" value="Eukaryota"/>
</dbReference>
<dbReference type="HOGENOM" id="CLU_046737_5_0_1"/>
<dbReference type="InParanoid" id="P04793"/>
<dbReference type="OMA" id="INIEMNG"/>
<dbReference type="OrthoDB" id="5511210at2759"/>
<dbReference type="Proteomes" id="UP000008827">
    <property type="component" value="Chromosome 7"/>
</dbReference>
<dbReference type="GO" id="GO:0005737">
    <property type="term" value="C:cytoplasm"/>
    <property type="evidence" value="ECO:0007669"/>
    <property type="project" value="UniProtKB-SubCell"/>
</dbReference>
<dbReference type="GO" id="GO:0051082">
    <property type="term" value="F:unfolded protein binding"/>
    <property type="evidence" value="ECO:0000318"/>
    <property type="project" value="GO_Central"/>
</dbReference>
<dbReference type="GO" id="GO:0051259">
    <property type="term" value="P:protein complex oligomerization"/>
    <property type="evidence" value="ECO:0000318"/>
    <property type="project" value="GO_Central"/>
</dbReference>
<dbReference type="GO" id="GO:0006457">
    <property type="term" value="P:protein folding"/>
    <property type="evidence" value="ECO:0000318"/>
    <property type="project" value="GO_Central"/>
</dbReference>
<dbReference type="GO" id="GO:0009408">
    <property type="term" value="P:response to heat"/>
    <property type="evidence" value="ECO:0000318"/>
    <property type="project" value="GO_Central"/>
</dbReference>
<dbReference type="GO" id="GO:0042542">
    <property type="term" value="P:response to hydrogen peroxide"/>
    <property type="evidence" value="ECO:0000318"/>
    <property type="project" value="GO_Central"/>
</dbReference>
<dbReference type="GO" id="GO:0009651">
    <property type="term" value="P:response to salt stress"/>
    <property type="evidence" value="ECO:0000318"/>
    <property type="project" value="GO_Central"/>
</dbReference>
<dbReference type="CDD" id="cd06472">
    <property type="entry name" value="ACD_ScHsp26_like"/>
    <property type="match status" value="1"/>
</dbReference>
<dbReference type="FunFam" id="2.60.40.790:FF:000009">
    <property type="entry name" value="17.6 kDa class I heat shock protein-like"/>
    <property type="match status" value="1"/>
</dbReference>
<dbReference type="Gene3D" id="2.60.40.790">
    <property type="match status" value="1"/>
</dbReference>
<dbReference type="InterPro" id="IPR002068">
    <property type="entry name" value="A-crystallin/Hsp20_dom"/>
</dbReference>
<dbReference type="InterPro" id="IPR008978">
    <property type="entry name" value="HSP20-like_chaperone"/>
</dbReference>
<dbReference type="InterPro" id="IPR031107">
    <property type="entry name" value="Small_HSP"/>
</dbReference>
<dbReference type="PANTHER" id="PTHR11527">
    <property type="entry name" value="HEAT-SHOCK PROTEIN 20 FAMILY MEMBER"/>
    <property type="match status" value="1"/>
</dbReference>
<dbReference type="Pfam" id="PF00011">
    <property type="entry name" value="HSP20"/>
    <property type="match status" value="1"/>
</dbReference>
<dbReference type="SUPFAM" id="SSF49764">
    <property type="entry name" value="HSP20-like chaperones"/>
    <property type="match status" value="1"/>
</dbReference>
<dbReference type="PROSITE" id="PS01031">
    <property type="entry name" value="SHSP"/>
    <property type="match status" value="1"/>
</dbReference>